<evidence type="ECO:0000255" key="1">
    <source>
        <dbReference type="HAMAP-Rule" id="MF_01025"/>
    </source>
</evidence>
<feature type="chain" id="PRO_1000149294" description="2-isopropylmalate synthase">
    <location>
        <begin position="1"/>
        <end position="523"/>
    </location>
</feature>
<feature type="domain" description="Pyruvate carboxyltransferase" evidence="1">
    <location>
        <begin position="5"/>
        <end position="267"/>
    </location>
</feature>
<feature type="region of interest" description="Regulatory domain" evidence="1">
    <location>
        <begin position="392"/>
        <end position="523"/>
    </location>
</feature>
<feature type="binding site" evidence="1">
    <location>
        <position position="14"/>
    </location>
    <ligand>
        <name>Mn(2+)</name>
        <dbReference type="ChEBI" id="CHEBI:29035"/>
    </ligand>
</feature>
<feature type="binding site" evidence="1">
    <location>
        <position position="202"/>
    </location>
    <ligand>
        <name>Mn(2+)</name>
        <dbReference type="ChEBI" id="CHEBI:29035"/>
    </ligand>
</feature>
<feature type="binding site" evidence="1">
    <location>
        <position position="204"/>
    </location>
    <ligand>
        <name>Mn(2+)</name>
        <dbReference type="ChEBI" id="CHEBI:29035"/>
    </ligand>
</feature>
<feature type="binding site" evidence="1">
    <location>
        <position position="238"/>
    </location>
    <ligand>
        <name>Mn(2+)</name>
        <dbReference type="ChEBI" id="CHEBI:29035"/>
    </ligand>
</feature>
<comment type="function">
    <text evidence="1">Catalyzes the condensation of the acetyl group of acetyl-CoA with 3-methyl-2-oxobutanoate (2-ketoisovalerate) to form 3-carboxy-3-hydroxy-4-methylpentanoate (2-isopropylmalate).</text>
</comment>
<comment type="catalytic activity">
    <reaction evidence="1">
        <text>3-methyl-2-oxobutanoate + acetyl-CoA + H2O = (2S)-2-isopropylmalate + CoA + H(+)</text>
        <dbReference type="Rhea" id="RHEA:21524"/>
        <dbReference type="ChEBI" id="CHEBI:1178"/>
        <dbReference type="ChEBI" id="CHEBI:11851"/>
        <dbReference type="ChEBI" id="CHEBI:15377"/>
        <dbReference type="ChEBI" id="CHEBI:15378"/>
        <dbReference type="ChEBI" id="CHEBI:57287"/>
        <dbReference type="ChEBI" id="CHEBI:57288"/>
        <dbReference type="EC" id="2.3.3.13"/>
    </reaction>
</comment>
<comment type="cofactor">
    <cofactor evidence="1">
        <name>Mn(2+)</name>
        <dbReference type="ChEBI" id="CHEBI:29035"/>
    </cofactor>
</comment>
<comment type="pathway">
    <text evidence="1">Amino-acid biosynthesis; L-leucine biosynthesis; L-leucine from 3-methyl-2-oxobutanoate: step 1/4.</text>
</comment>
<comment type="subunit">
    <text evidence="1">Homodimer.</text>
</comment>
<comment type="subcellular location">
    <subcellularLocation>
        <location evidence="1">Cytoplasm</location>
    </subcellularLocation>
</comment>
<comment type="similarity">
    <text evidence="1">Belongs to the alpha-IPM synthase/homocitrate synthase family. LeuA type 1 subfamily.</text>
</comment>
<dbReference type="EC" id="2.3.3.13" evidence="1"/>
<dbReference type="EMBL" id="CP000961">
    <property type="protein sequence ID" value="ACA88800.1"/>
    <property type="molecule type" value="Genomic_DNA"/>
</dbReference>
<dbReference type="RefSeq" id="WP_012327126.1">
    <property type="nucleotide sequence ID" value="NC_010506.1"/>
</dbReference>
<dbReference type="SMR" id="B1KKZ4"/>
<dbReference type="STRING" id="392500.Swoo_4550"/>
<dbReference type="KEGG" id="swd:Swoo_4550"/>
<dbReference type="eggNOG" id="COG0119">
    <property type="taxonomic scope" value="Bacteria"/>
</dbReference>
<dbReference type="HOGENOM" id="CLU_022158_0_1_6"/>
<dbReference type="UniPathway" id="UPA00048">
    <property type="reaction ID" value="UER00070"/>
</dbReference>
<dbReference type="Proteomes" id="UP000002168">
    <property type="component" value="Chromosome"/>
</dbReference>
<dbReference type="GO" id="GO:0005829">
    <property type="term" value="C:cytosol"/>
    <property type="evidence" value="ECO:0007669"/>
    <property type="project" value="TreeGrafter"/>
</dbReference>
<dbReference type="GO" id="GO:0003852">
    <property type="term" value="F:2-isopropylmalate synthase activity"/>
    <property type="evidence" value="ECO:0007669"/>
    <property type="project" value="UniProtKB-UniRule"/>
</dbReference>
<dbReference type="GO" id="GO:0003985">
    <property type="term" value="F:acetyl-CoA C-acetyltransferase activity"/>
    <property type="evidence" value="ECO:0007669"/>
    <property type="project" value="UniProtKB-UniRule"/>
</dbReference>
<dbReference type="GO" id="GO:0030145">
    <property type="term" value="F:manganese ion binding"/>
    <property type="evidence" value="ECO:0007669"/>
    <property type="project" value="UniProtKB-UniRule"/>
</dbReference>
<dbReference type="GO" id="GO:0009098">
    <property type="term" value="P:L-leucine biosynthetic process"/>
    <property type="evidence" value="ECO:0007669"/>
    <property type="project" value="UniProtKB-UniRule"/>
</dbReference>
<dbReference type="CDD" id="cd07940">
    <property type="entry name" value="DRE_TIM_IPMS"/>
    <property type="match status" value="1"/>
</dbReference>
<dbReference type="FunFam" id="1.10.238.260:FF:000001">
    <property type="entry name" value="2-isopropylmalate synthase"/>
    <property type="match status" value="1"/>
</dbReference>
<dbReference type="FunFam" id="3.20.20.70:FF:000010">
    <property type="entry name" value="2-isopropylmalate synthase"/>
    <property type="match status" value="1"/>
</dbReference>
<dbReference type="FunFam" id="3.30.160.270:FF:000001">
    <property type="entry name" value="2-isopropylmalate synthase"/>
    <property type="match status" value="1"/>
</dbReference>
<dbReference type="Gene3D" id="1.10.238.260">
    <property type="match status" value="1"/>
</dbReference>
<dbReference type="Gene3D" id="3.30.160.270">
    <property type="match status" value="1"/>
</dbReference>
<dbReference type="Gene3D" id="3.20.20.70">
    <property type="entry name" value="Aldolase class I"/>
    <property type="match status" value="1"/>
</dbReference>
<dbReference type="HAMAP" id="MF_01025">
    <property type="entry name" value="LeuA_type1"/>
    <property type="match status" value="1"/>
</dbReference>
<dbReference type="InterPro" id="IPR050073">
    <property type="entry name" value="2-IPM_HCS-like"/>
</dbReference>
<dbReference type="InterPro" id="IPR013709">
    <property type="entry name" value="2-isopropylmalate_synth_dimer"/>
</dbReference>
<dbReference type="InterPro" id="IPR002034">
    <property type="entry name" value="AIPM/Hcit_synth_CS"/>
</dbReference>
<dbReference type="InterPro" id="IPR013785">
    <property type="entry name" value="Aldolase_TIM"/>
</dbReference>
<dbReference type="InterPro" id="IPR054691">
    <property type="entry name" value="LeuA/HCS_post-cat"/>
</dbReference>
<dbReference type="InterPro" id="IPR036230">
    <property type="entry name" value="LeuA_allosteric_dom_sf"/>
</dbReference>
<dbReference type="InterPro" id="IPR005671">
    <property type="entry name" value="LeuA_bact_synth"/>
</dbReference>
<dbReference type="InterPro" id="IPR000891">
    <property type="entry name" value="PYR_CT"/>
</dbReference>
<dbReference type="NCBIfam" id="TIGR00973">
    <property type="entry name" value="leuA_bact"/>
    <property type="match status" value="1"/>
</dbReference>
<dbReference type="NCBIfam" id="NF002084">
    <property type="entry name" value="PRK00915.1-1"/>
    <property type="match status" value="1"/>
</dbReference>
<dbReference type="NCBIfam" id="NF002086">
    <property type="entry name" value="PRK00915.1-3"/>
    <property type="match status" value="1"/>
</dbReference>
<dbReference type="PANTHER" id="PTHR10277:SF9">
    <property type="entry name" value="2-ISOPROPYLMALATE SYNTHASE 1, CHLOROPLASTIC-RELATED"/>
    <property type="match status" value="1"/>
</dbReference>
<dbReference type="PANTHER" id="PTHR10277">
    <property type="entry name" value="HOMOCITRATE SYNTHASE-RELATED"/>
    <property type="match status" value="1"/>
</dbReference>
<dbReference type="Pfam" id="PF22617">
    <property type="entry name" value="HCS_D2"/>
    <property type="match status" value="1"/>
</dbReference>
<dbReference type="Pfam" id="PF00682">
    <property type="entry name" value="HMGL-like"/>
    <property type="match status" value="1"/>
</dbReference>
<dbReference type="Pfam" id="PF08502">
    <property type="entry name" value="LeuA_dimer"/>
    <property type="match status" value="1"/>
</dbReference>
<dbReference type="SMART" id="SM00917">
    <property type="entry name" value="LeuA_dimer"/>
    <property type="match status" value="1"/>
</dbReference>
<dbReference type="SUPFAM" id="SSF110921">
    <property type="entry name" value="2-isopropylmalate synthase LeuA, allosteric (dimerisation) domain"/>
    <property type="match status" value="1"/>
</dbReference>
<dbReference type="SUPFAM" id="SSF51569">
    <property type="entry name" value="Aldolase"/>
    <property type="match status" value="1"/>
</dbReference>
<dbReference type="PROSITE" id="PS00815">
    <property type="entry name" value="AIPM_HOMOCIT_SYNTH_1"/>
    <property type="match status" value="1"/>
</dbReference>
<dbReference type="PROSITE" id="PS00816">
    <property type="entry name" value="AIPM_HOMOCIT_SYNTH_2"/>
    <property type="match status" value="1"/>
</dbReference>
<dbReference type="PROSITE" id="PS50991">
    <property type="entry name" value="PYR_CT"/>
    <property type="match status" value="1"/>
</dbReference>
<name>LEU1_SHEWM</name>
<proteinExistence type="inferred from homology"/>
<accession>B1KKZ4</accession>
<reference key="1">
    <citation type="submission" date="2008-02" db="EMBL/GenBank/DDBJ databases">
        <title>Complete sequence of Shewanella woodyi ATCC 51908.</title>
        <authorList>
            <consortium name="US DOE Joint Genome Institute"/>
            <person name="Copeland A."/>
            <person name="Lucas S."/>
            <person name="Lapidus A."/>
            <person name="Glavina del Rio T."/>
            <person name="Dalin E."/>
            <person name="Tice H."/>
            <person name="Bruce D."/>
            <person name="Goodwin L."/>
            <person name="Pitluck S."/>
            <person name="Sims D."/>
            <person name="Brettin T."/>
            <person name="Detter J.C."/>
            <person name="Han C."/>
            <person name="Kuske C.R."/>
            <person name="Schmutz J."/>
            <person name="Larimer F."/>
            <person name="Land M."/>
            <person name="Hauser L."/>
            <person name="Kyrpides N."/>
            <person name="Lykidis A."/>
            <person name="Zhao J.-S."/>
            <person name="Richardson P."/>
        </authorList>
    </citation>
    <scope>NUCLEOTIDE SEQUENCE [LARGE SCALE GENOMIC DNA]</scope>
    <source>
        <strain>ATCC 51908 / MS32</strain>
    </source>
</reference>
<protein>
    <recommendedName>
        <fullName evidence="1">2-isopropylmalate synthase</fullName>
        <ecNumber evidence="1">2.3.3.13</ecNumber>
    </recommendedName>
    <alternativeName>
        <fullName evidence="1">Alpha-IPM synthase</fullName>
    </alternativeName>
    <alternativeName>
        <fullName evidence="1">Alpha-isopropylmalate synthase</fullName>
    </alternativeName>
</protein>
<organism>
    <name type="scientific">Shewanella woodyi (strain ATCC 51908 / MS32)</name>
    <dbReference type="NCBI Taxonomy" id="392500"/>
    <lineage>
        <taxon>Bacteria</taxon>
        <taxon>Pseudomonadati</taxon>
        <taxon>Pseudomonadota</taxon>
        <taxon>Gammaproteobacteria</taxon>
        <taxon>Alteromonadales</taxon>
        <taxon>Shewanellaceae</taxon>
        <taxon>Shewanella</taxon>
    </lineage>
</organism>
<gene>
    <name evidence="1" type="primary">leuA</name>
    <name type="ordered locus">Swoo_4550</name>
</gene>
<keyword id="KW-0028">Amino-acid biosynthesis</keyword>
<keyword id="KW-0100">Branched-chain amino acid biosynthesis</keyword>
<keyword id="KW-0963">Cytoplasm</keyword>
<keyword id="KW-0432">Leucine biosynthesis</keyword>
<keyword id="KW-0464">Manganese</keyword>
<keyword id="KW-0479">Metal-binding</keyword>
<keyword id="KW-1185">Reference proteome</keyword>
<keyword id="KW-0808">Transferase</keyword>
<sequence>MSNRVIIFDTTLRDGEQALAASLTVKEKLQIALSLERLGVDVMEVGFPVSSPGDFKSVETIARTVKNSRVCALARALEKDIDAAAQSLSVADQFRIHTFISTSTIHVESKLKRSFDQVLEMAVGAVKYARRFTDDVEFSCEDAGRTPIDNLCRMVEEAIKAGAKTINIPDTVGYTVPSEFGGIIETLFNRVPNIDQAVISVHCHDDLGLSVANSITAVQQGARQIECTVNGIGERAGNCSLEEIAMILSTRKAALGLETGINAKEIHRTSSLVSQLCNMPVQANKAIVGANAFTHSSGIHQDGMLKSQNTYEIMTPESIGLPRNNLNMTSRSGRHVIKHRMEEMGYGEHDYDMDVLYESFLKLADKKGQVFDYDLEALTFMEAQAEEESFYQLKQLVVHSDSTQGNATATVKIELDGEVVTEAATGNGPVDAAYNAIARASKCEINITSYKLSAKGEGQDALGQVDIEASYQQQSFHGVGLATDVVEASVQALIHVMNLTWRADKVADCKQKIQQKARSLGGV</sequence>